<dbReference type="EC" id="1.2.4.4"/>
<dbReference type="EMBL" id="AE004091">
    <property type="protein sequence ID" value="AAG05635.1"/>
    <property type="molecule type" value="Genomic_DNA"/>
</dbReference>
<dbReference type="PIR" id="C83365">
    <property type="entry name" value="C83365"/>
</dbReference>
<dbReference type="PIR" id="S05057">
    <property type="entry name" value="S05057"/>
</dbReference>
<dbReference type="RefSeq" id="NP_250937.1">
    <property type="nucleotide sequence ID" value="NC_002516.2"/>
</dbReference>
<dbReference type="RefSeq" id="WP_003111886.1">
    <property type="nucleotide sequence ID" value="NZ_QZGE01000014.1"/>
</dbReference>
<dbReference type="SMR" id="Q9I1M2"/>
<dbReference type="STRING" id="208964.PA2247"/>
<dbReference type="PaxDb" id="208964-PA2247"/>
<dbReference type="GeneID" id="877901"/>
<dbReference type="KEGG" id="pae:PA2247"/>
<dbReference type="PATRIC" id="fig|208964.12.peg.2348"/>
<dbReference type="PseudoCAP" id="PA2247"/>
<dbReference type="HOGENOM" id="CLU_029393_1_0_6"/>
<dbReference type="InParanoid" id="Q9I1M2"/>
<dbReference type="OrthoDB" id="9766715at2"/>
<dbReference type="PhylomeDB" id="Q9I1M2"/>
<dbReference type="BioCyc" id="PAER208964:G1FZ6-2286-MONOMER"/>
<dbReference type="Proteomes" id="UP000002438">
    <property type="component" value="Chromosome"/>
</dbReference>
<dbReference type="GO" id="GO:0003863">
    <property type="term" value="F:3-methyl-2-oxobutanoate dehydrogenase (2-methylpropanoyl-transferring) activity"/>
    <property type="evidence" value="ECO:0007669"/>
    <property type="project" value="UniProtKB-EC"/>
</dbReference>
<dbReference type="GO" id="GO:0009083">
    <property type="term" value="P:branched-chain amino acid catabolic process"/>
    <property type="evidence" value="ECO:0000318"/>
    <property type="project" value="GO_Central"/>
</dbReference>
<dbReference type="CDD" id="cd02000">
    <property type="entry name" value="TPP_E1_PDC_ADC_BCADC"/>
    <property type="match status" value="1"/>
</dbReference>
<dbReference type="FunFam" id="3.40.50.970:FF:000073">
    <property type="entry name" value="2-oxoisovalerate dehydrogenase subunit alpha"/>
    <property type="match status" value="1"/>
</dbReference>
<dbReference type="Gene3D" id="3.40.50.970">
    <property type="match status" value="1"/>
</dbReference>
<dbReference type="InterPro" id="IPR050771">
    <property type="entry name" value="Alpha-ketoacid_DH_E1_comp"/>
</dbReference>
<dbReference type="InterPro" id="IPR001017">
    <property type="entry name" value="DH_E1"/>
</dbReference>
<dbReference type="InterPro" id="IPR022593">
    <property type="entry name" value="Oxoisoval_DH_suAlpha_N_dom"/>
</dbReference>
<dbReference type="InterPro" id="IPR029061">
    <property type="entry name" value="THDP-binding"/>
</dbReference>
<dbReference type="PANTHER" id="PTHR43380">
    <property type="entry name" value="2-OXOISOVALERATE DEHYDROGENASE SUBUNIT ALPHA, MITOCHONDRIAL"/>
    <property type="match status" value="1"/>
</dbReference>
<dbReference type="PANTHER" id="PTHR43380:SF1">
    <property type="entry name" value="2-OXOISOVALERATE DEHYDROGENASE SUBUNIT ALPHA, MITOCHONDRIAL"/>
    <property type="match status" value="1"/>
</dbReference>
<dbReference type="Pfam" id="PF00676">
    <property type="entry name" value="E1_dh"/>
    <property type="match status" value="1"/>
</dbReference>
<dbReference type="Pfam" id="PF12573">
    <property type="entry name" value="OxoDH_E1alpha_N"/>
    <property type="match status" value="1"/>
</dbReference>
<dbReference type="SUPFAM" id="SSF52518">
    <property type="entry name" value="Thiamin diphosphate-binding fold (THDP-binding)"/>
    <property type="match status" value="1"/>
</dbReference>
<comment type="function">
    <text evidence="1">The branched-chain alpha-keto dehydrogenase complex catalyzes the overall conversion of alpha-keto acids to acyl-CoA and CO(2). It contains multiple copies of three enzymatic components: branched-chain alpha-keto acid decarboxylase (E1), lipoamide acyltransferase (E2) and lipoamide dehydrogenase (E3) (By similarity).</text>
</comment>
<comment type="catalytic activity">
    <reaction>
        <text>N(6)-[(R)-lipoyl]-L-lysyl-[protein] + 3-methyl-2-oxobutanoate + H(+) = N(6)-[(R)-S(8)-2-methylpropanoyldihydrolipoyl]-L-lysyl-[protein] + CO2</text>
        <dbReference type="Rhea" id="RHEA:13457"/>
        <dbReference type="Rhea" id="RHEA-COMP:10474"/>
        <dbReference type="Rhea" id="RHEA-COMP:10497"/>
        <dbReference type="ChEBI" id="CHEBI:11851"/>
        <dbReference type="ChEBI" id="CHEBI:15378"/>
        <dbReference type="ChEBI" id="CHEBI:16526"/>
        <dbReference type="ChEBI" id="CHEBI:83099"/>
        <dbReference type="ChEBI" id="CHEBI:83142"/>
        <dbReference type="EC" id="1.2.4.4"/>
    </reaction>
</comment>
<comment type="cofactor">
    <cofactor evidence="1">
        <name>thiamine diphosphate</name>
        <dbReference type="ChEBI" id="CHEBI:58937"/>
    </cofactor>
</comment>
<comment type="subunit">
    <text evidence="1">Heterodimer of an alpha and a beta chain.</text>
</comment>
<comment type="similarity">
    <text evidence="2">Belongs to the BCKDHA family.</text>
</comment>
<proteinExistence type="inferred from homology"/>
<evidence type="ECO:0000250" key="1"/>
<evidence type="ECO:0000305" key="2"/>
<reference key="1">
    <citation type="journal article" date="2000" name="Nature">
        <title>Complete genome sequence of Pseudomonas aeruginosa PAO1, an opportunistic pathogen.</title>
        <authorList>
            <person name="Stover C.K."/>
            <person name="Pham X.-Q.T."/>
            <person name="Erwin A.L."/>
            <person name="Mizoguchi S.D."/>
            <person name="Warrener P."/>
            <person name="Hickey M.J."/>
            <person name="Brinkman F.S.L."/>
            <person name="Hufnagle W.O."/>
            <person name="Kowalik D.J."/>
            <person name="Lagrou M."/>
            <person name="Garber R.L."/>
            <person name="Goltry L."/>
            <person name="Tolentino E."/>
            <person name="Westbrock-Wadman S."/>
            <person name="Yuan Y."/>
            <person name="Brody L.L."/>
            <person name="Coulter S.N."/>
            <person name="Folger K.R."/>
            <person name="Kas A."/>
            <person name="Larbig K."/>
            <person name="Lim R.M."/>
            <person name="Smith K.A."/>
            <person name="Spencer D.H."/>
            <person name="Wong G.K.-S."/>
            <person name="Wu Z."/>
            <person name="Paulsen I.T."/>
            <person name="Reizer J."/>
            <person name="Saier M.H. Jr."/>
            <person name="Hancock R.E.W."/>
            <person name="Lory S."/>
            <person name="Olson M.V."/>
        </authorList>
    </citation>
    <scope>NUCLEOTIDE SEQUENCE [LARGE SCALE GENOMIC DNA]</scope>
    <source>
        <strain>ATCC 15692 / DSM 22644 / CIP 104116 / JCM 14847 / LMG 12228 / 1C / PRS 101 / PAO1</strain>
    </source>
</reference>
<gene>
    <name type="primary">bkdA1</name>
    <name type="ordered locus">PA2247</name>
</gene>
<sequence>MSDYEPLRLHVPEPTGRPGCKTDFSYLHLSPAGEVRKPPVDVEPAETSDLAYSLVRVLDDDGHAVGPWNPQLSNEQLLRGMRAMLKTRLFDARMLTAQRQKKLSFYMQCLGEEAIATAHTLALRDGDMCFPTYRQQGILITREYPLVDMICQLLSNEADPLKGRQLPIMYSSKEAGFFSISGNLATQFIQAVGWGMASAIKGDTRIASAWIGDGATAESDFHTALTFAHVYRAPVILNVVNNQWAISTFQAIAGGEGTTFANRGVGCGIASLRVDGNDFLAVYAASEWAAERARRNLGPSLIEWVTYRAGPHSTSDDPSKYRPADDWTNFPLGDPIARLKRHMIGLGIWSEEQHEATHKALEAEVLAAQKQAESHGTLIDGRVPSAASMFEDVYAELPEHLRRQRQELGV</sequence>
<feature type="chain" id="PRO_0000287782" description="2-oxoisovalerate dehydrogenase subunit alpha">
    <location>
        <begin position="1"/>
        <end position="410"/>
    </location>
</feature>
<name>ODBA_PSEAE</name>
<organism>
    <name type="scientific">Pseudomonas aeruginosa (strain ATCC 15692 / DSM 22644 / CIP 104116 / JCM 14847 / LMG 12228 / 1C / PRS 101 / PAO1)</name>
    <dbReference type="NCBI Taxonomy" id="208964"/>
    <lineage>
        <taxon>Bacteria</taxon>
        <taxon>Pseudomonadati</taxon>
        <taxon>Pseudomonadota</taxon>
        <taxon>Gammaproteobacteria</taxon>
        <taxon>Pseudomonadales</taxon>
        <taxon>Pseudomonadaceae</taxon>
        <taxon>Pseudomonas</taxon>
    </lineage>
</organism>
<keyword id="KW-0560">Oxidoreductase</keyword>
<keyword id="KW-1185">Reference proteome</keyword>
<keyword id="KW-0786">Thiamine pyrophosphate</keyword>
<accession>Q9I1M2</accession>
<protein>
    <recommendedName>
        <fullName>2-oxoisovalerate dehydrogenase subunit alpha</fullName>
        <ecNumber>1.2.4.4</ecNumber>
    </recommendedName>
    <alternativeName>
        <fullName>Branched-chain alpha-keto acid dehydrogenase E1 component alpha chain</fullName>
        <shortName>BCKDH E1-alpha</shortName>
    </alternativeName>
</protein>